<feature type="initiator methionine" description="Removed" evidence="1">
    <location>
        <position position="1"/>
    </location>
</feature>
<feature type="chain" id="PRO_0000228454" description="Formamidopyrimidine-DNA glycosylase">
    <location>
        <begin position="2"/>
        <end position="276"/>
    </location>
</feature>
<feature type="zinc finger region" description="FPG-type" evidence="2">
    <location>
        <begin position="241"/>
        <end position="275"/>
    </location>
</feature>
<feature type="active site" description="Schiff-base intermediate with DNA" evidence="2">
    <location>
        <position position="2"/>
    </location>
</feature>
<feature type="active site" description="Proton donor" evidence="2">
    <location>
        <position position="3"/>
    </location>
</feature>
<feature type="active site" description="Proton donor; for beta-elimination activity" evidence="2">
    <location>
        <position position="60"/>
    </location>
</feature>
<feature type="active site" description="Proton donor; for delta-elimination activity" evidence="2">
    <location>
        <position position="265"/>
    </location>
</feature>
<feature type="binding site" evidence="2">
    <location>
        <position position="113"/>
    </location>
    <ligand>
        <name>DNA</name>
        <dbReference type="ChEBI" id="CHEBI:16991"/>
    </ligand>
</feature>
<feature type="binding site" evidence="2">
    <location>
        <position position="152"/>
    </location>
    <ligand>
        <name>DNA</name>
        <dbReference type="ChEBI" id="CHEBI:16991"/>
    </ligand>
</feature>
<dbReference type="EC" id="3.2.2.23" evidence="2"/>
<dbReference type="EC" id="4.2.99.18" evidence="2"/>
<dbReference type="EMBL" id="BX908798">
    <property type="protein sequence ID" value="CAF23616.1"/>
    <property type="molecule type" value="Genomic_DNA"/>
</dbReference>
<dbReference type="RefSeq" id="WP_011175442.1">
    <property type="nucleotide sequence ID" value="NC_005861.2"/>
</dbReference>
<dbReference type="SMR" id="Q6MCT3"/>
<dbReference type="STRING" id="264201.pc0892"/>
<dbReference type="KEGG" id="pcu:PC_RS04305"/>
<dbReference type="eggNOG" id="COG0266">
    <property type="taxonomic scope" value="Bacteria"/>
</dbReference>
<dbReference type="HOGENOM" id="CLU_038423_1_2_0"/>
<dbReference type="OrthoDB" id="9800855at2"/>
<dbReference type="Proteomes" id="UP000000529">
    <property type="component" value="Chromosome"/>
</dbReference>
<dbReference type="GO" id="GO:0034039">
    <property type="term" value="F:8-oxo-7,8-dihydroguanine DNA N-glycosylase activity"/>
    <property type="evidence" value="ECO:0007669"/>
    <property type="project" value="TreeGrafter"/>
</dbReference>
<dbReference type="GO" id="GO:0140078">
    <property type="term" value="F:class I DNA-(apurinic or apyrimidinic site) endonuclease activity"/>
    <property type="evidence" value="ECO:0007669"/>
    <property type="project" value="UniProtKB-EC"/>
</dbReference>
<dbReference type="GO" id="GO:0003684">
    <property type="term" value="F:damaged DNA binding"/>
    <property type="evidence" value="ECO:0007669"/>
    <property type="project" value="InterPro"/>
</dbReference>
<dbReference type="GO" id="GO:0008270">
    <property type="term" value="F:zinc ion binding"/>
    <property type="evidence" value="ECO:0007669"/>
    <property type="project" value="UniProtKB-UniRule"/>
</dbReference>
<dbReference type="GO" id="GO:0006284">
    <property type="term" value="P:base-excision repair"/>
    <property type="evidence" value="ECO:0007669"/>
    <property type="project" value="InterPro"/>
</dbReference>
<dbReference type="CDD" id="cd08966">
    <property type="entry name" value="EcFpg-like_N"/>
    <property type="match status" value="1"/>
</dbReference>
<dbReference type="FunFam" id="1.10.8.50:FF:000003">
    <property type="entry name" value="Formamidopyrimidine-DNA glycosylase"/>
    <property type="match status" value="1"/>
</dbReference>
<dbReference type="Gene3D" id="1.10.8.50">
    <property type="match status" value="1"/>
</dbReference>
<dbReference type="Gene3D" id="3.20.190.10">
    <property type="entry name" value="MutM-like, N-terminal"/>
    <property type="match status" value="1"/>
</dbReference>
<dbReference type="HAMAP" id="MF_00103">
    <property type="entry name" value="Fapy_DNA_glycosyl"/>
    <property type="match status" value="1"/>
</dbReference>
<dbReference type="InterPro" id="IPR015886">
    <property type="entry name" value="DNA_glyclase/AP_lyase_DNA-bd"/>
</dbReference>
<dbReference type="InterPro" id="IPR015887">
    <property type="entry name" value="DNA_glyclase_Znf_dom_DNA_BS"/>
</dbReference>
<dbReference type="InterPro" id="IPR020629">
    <property type="entry name" value="Formamido-pyr_DNA_Glyclase"/>
</dbReference>
<dbReference type="InterPro" id="IPR012319">
    <property type="entry name" value="FPG_cat"/>
</dbReference>
<dbReference type="InterPro" id="IPR035937">
    <property type="entry name" value="MutM-like_N-ter"/>
</dbReference>
<dbReference type="InterPro" id="IPR010979">
    <property type="entry name" value="Ribosomal_uS13-like_H2TH"/>
</dbReference>
<dbReference type="InterPro" id="IPR000214">
    <property type="entry name" value="Znf_DNA_glyclase/AP_lyase"/>
</dbReference>
<dbReference type="InterPro" id="IPR010663">
    <property type="entry name" value="Znf_FPG/IleRS"/>
</dbReference>
<dbReference type="NCBIfam" id="TIGR00577">
    <property type="entry name" value="fpg"/>
    <property type="match status" value="1"/>
</dbReference>
<dbReference type="NCBIfam" id="NF002211">
    <property type="entry name" value="PRK01103.1"/>
    <property type="match status" value="1"/>
</dbReference>
<dbReference type="PANTHER" id="PTHR22993">
    <property type="entry name" value="FORMAMIDOPYRIMIDINE-DNA GLYCOSYLASE"/>
    <property type="match status" value="1"/>
</dbReference>
<dbReference type="PANTHER" id="PTHR22993:SF9">
    <property type="entry name" value="FORMAMIDOPYRIMIDINE-DNA GLYCOSYLASE"/>
    <property type="match status" value="1"/>
</dbReference>
<dbReference type="Pfam" id="PF01149">
    <property type="entry name" value="Fapy_DNA_glyco"/>
    <property type="match status" value="1"/>
</dbReference>
<dbReference type="Pfam" id="PF06831">
    <property type="entry name" value="H2TH"/>
    <property type="match status" value="1"/>
</dbReference>
<dbReference type="Pfam" id="PF06827">
    <property type="entry name" value="zf-FPG_IleRS"/>
    <property type="match status" value="1"/>
</dbReference>
<dbReference type="SMART" id="SM00898">
    <property type="entry name" value="Fapy_DNA_glyco"/>
    <property type="match status" value="1"/>
</dbReference>
<dbReference type="SMART" id="SM01232">
    <property type="entry name" value="H2TH"/>
    <property type="match status" value="1"/>
</dbReference>
<dbReference type="SUPFAM" id="SSF57716">
    <property type="entry name" value="Glucocorticoid receptor-like (DNA-binding domain)"/>
    <property type="match status" value="1"/>
</dbReference>
<dbReference type="SUPFAM" id="SSF81624">
    <property type="entry name" value="N-terminal domain of MutM-like DNA repair proteins"/>
    <property type="match status" value="1"/>
</dbReference>
<dbReference type="SUPFAM" id="SSF46946">
    <property type="entry name" value="S13-like H2TH domain"/>
    <property type="match status" value="1"/>
</dbReference>
<dbReference type="PROSITE" id="PS51068">
    <property type="entry name" value="FPG_CAT"/>
    <property type="match status" value="1"/>
</dbReference>
<dbReference type="PROSITE" id="PS01242">
    <property type="entry name" value="ZF_FPG_1"/>
    <property type="match status" value="1"/>
</dbReference>
<dbReference type="PROSITE" id="PS51066">
    <property type="entry name" value="ZF_FPG_2"/>
    <property type="match status" value="1"/>
</dbReference>
<protein>
    <recommendedName>
        <fullName evidence="2">Formamidopyrimidine-DNA glycosylase</fullName>
        <shortName evidence="2">Fapy-DNA glycosylase</shortName>
        <ecNumber evidence="2">3.2.2.23</ecNumber>
    </recommendedName>
    <alternativeName>
        <fullName evidence="2">DNA-(apurinic or apyrimidinic site) lyase MutM</fullName>
        <shortName evidence="2">AP lyase MutM</shortName>
        <ecNumber evidence="2">4.2.99.18</ecNumber>
    </alternativeName>
</protein>
<sequence length="276" mass="31917">MPELPEVHTIVQDLKQSRLIGKKIISTEIFWPKTLAVPTPEIFCQQVQGQSIQNVDRRGKYIIFQLSNQMFLIVHLRMTGRFQFVTSQTPASPYVRIQFNFENGDQLRFHDTRKFGRWYLVSDVEEIIGHLGPEPLLSSFTFELFEDMMKNRKTLLKSLLLDQSFIVGLGNIYVDEALWEAKLHPLIPANQINLKHLKILYHSIKYVLEKGIQARGTTLGPGRTHYYRLDGSKGEHQTLLNVFRKTGHPCPRCGHLIEKLIVAQRSTHICPICQKK</sequence>
<gene>
    <name evidence="2" type="primary">mutM</name>
    <name evidence="2" type="synonym">fpg</name>
    <name type="ordered locus">pc0892</name>
</gene>
<keyword id="KW-0227">DNA damage</keyword>
<keyword id="KW-0234">DNA repair</keyword>
<keyword id="KW-0238">DNA-binding</keyword>
<keyword id="KW-0326">Glycosidase</keyword>
<keyword id="KW-0378">Hydrolase</keyword>
<keyword id="KW-0456">Lyase</keyword>
<keyword id="KW-0479">Metal-binding</keyword>
<keyword id="KW-0511">Multifunctional enzyme</keyword>
<keyword id="KW-1185">Reference proteome</keyword>
<keyword id="KW-0862">Zinc</keyword>
<keyword id="KW-0863">Zinc-finger</keyword>
<comment type="function">
    <text evidence="2">Involved in base excision repair of DNA damaged by oxidation or by mutagenic agents. Acts as a DNA glycosylase that recognizes and removes damaged bases. Has a preference for oxidized purines, such as 7,8-dihydro-8-oxoguanine (8-oxoG). Has AP (apurinic/apyrimidinic) lyase activity and introduces nicks in the DNA strand. Cleaves the DNA backbone by beta-delta elimination to generate a single-strand break at the site of the removed base with both 3'- and 5'-phosphates.</text>
</comment>
<comment type="catalytic activity">
    <reaction evidence="2">
        <text>Hydrolysis of DNA containing ring-opened 7-methylguanine residues, releasing 2,6-diamino-4-hydroxy-5-(N-methyl)formamidopyrimidine.</text>
        <dbReference type="EC" id="3.2.2.23"/>
    </reaction>
</comment>
<comment type="catalytic activity">
    <reaction evidence="2">
        <text>2'-deoxyribonucleotide-(2'-deoxyribose 5'-phosphate)-2'-deoxyribonucleotide-DNA = a 3'-end 2'-deoxyribonucleotide-(2,3-dehydro-2,3-deoxyribose 5'-phosphate)-DNA + a 5'-end 5'-phospho-2'-deoxyribonucleoside-DNA + H(+)</text>
        <dbReference type="Rhea" id="RHEA:66592"/>
        <dbReference type="Rhea" id="RHEA-COMP:13180"/>
        <dbReference type="Rhea" id="RHEA-COMP:16897"/>
        <dbReference type="Rhea" id="RHEA-COMP:17067"/>
        <dbReference type="ChEBI" id="CHEBI:15378"/>
        <dbReference type="ChEBI" id="CHEBI:136412"/>
        <dbReference type="ChEBI" id="CHEBI:157695"/>
        <dbReference type="ChEBI" id="CHEBI:167181"/>
        <dbReference type="EC" id="4.2.99.18"/>
    </reaction>
</comment>
<comment type="cofactor">
    <cofactor evidence="2">
        <name>Zn(2+)</name>
        <dbReference type="ChEBI" id="CHEBI:29105"/>
    </cofactor>
    <text evidence="2">Binds 1 zinc ion per subunit.</text>
</comment>
<comment type="subunit">
    <text evidence="2">Monomer.</text>
</comment>
<comment type="similarity">
    <text evidence="2">Belongs to the FPG family.</text>
</comment>
<organism>
    <name type="scientific">Protochlamydia amoebophila (strain UWE25)</name>
    <dbReference type="NCBI Taxonomy" id="264201"/>
    <lineage>
        <taxon>Bacteria</taxon>
        <taxon>Pseudomonadati</taxon>
        <taxon>Chlamydiota</taxon>
        <taxon>Chlamydiia</taxon>
        <taxon>Parachlamydiales</taxon>
        <taxon>Parachlamydiaceae</taxon>
        <taxon>Candidatus Protochlamydia</taxon>
    </lineage>
</organism>
<name>FPG_PARUW</name>
<accession>Q6MCT3</accession>
<proteinExistence type="inferred from homology"/>
<evidence type="ECO:0000250" key="1"/>
<evidence type="ECO:0000255" key="2">
    <source>
        <dbReference type="HAMAP-Rule" id="MF_00103"/>
    </source>
</evidence>
<reference key="1">
    <citation type="journal article" date="2004" name="Science">
        <title>Illuminating the evolutionary history of chlamydiae.</title>
        <authorList>
            <person name="Horn M."/>
            <person name="Collingro A."/>
            <person name="Schmitz-Esser S."/>
            <person name="Beier C.L."/>
            <person name="Purkhold U."/>
            <person name="Fartmann B."/>
            <person name="Brandt P."/>
            <person name="Nyakatura G.J."/>
            <person name="Droege M."/>
            <person name="Frishman D."/>
            <person name="Rattei T."/>
            <person name="Mewes H.-W."/>
            <person name="Wagner M."/>
        </authorList>
    </citation>
    <scope>NUCLEOTIDE SEQUENCE [LARGE SCALE GENOMIC DNA]</scope>
    <source>
        <strain>UWE25</strain>
    </source>
</reference>